<name>UVRC_SALSV</name>
<accession>B4TYW7</accession>
<sequence>MSEIFDAKAFLKTVTSQPGVYRMYDAGGTVIYVGKAKDLKKRLSSYFRSNLASRKTEALVAQIQHIDVTVTHTETEALLLEHNYIKLYQPRYNVLLRDDKSYPFIFLSGDTHPRLAMHRGAKHAKGEYFGPFPNGYAVRETLALLQKIFPIRQCENSVYRNRSRPCLQYQIGRCLGPCVAGLVSEEEYTQQVEYVRLFLSGKDDQVLTQLIARMEKASQDLAFEEAARIRDQIQAVRRVTERQFVSNAGDDLDVIGVAFDAGMACVHVLFIRQGKVLGSRSYFPKVPGGTELGEVVETFVGQFYLQGSQMRTLPGEILLDFNLSDKTLLADSLSELAGRRIHVQTKPRGDRARYLKLARTNAATALITKLSQQSTITQRLTALAAVLKLPAIKRMECFDISHTMGEQTVASCVVFDANGPLRAEYRRYNIAGITPGDDYAAMNQVLRRRYGKAIEESKIPDVILIDGGKGQLAQAKAVFAELDVPWDKHRPLLLGVAKGADRKAGLETLFFEPEGEGFSLPPDSPALHVIQHIRDESHDHAIGGHRKKRAKVKNTSTLETIEGVGPKRRQMLLKYMGGLQGLRNASVEEIAKVPGISQGLAEKIFWSLKH</sequence>
<proteinExistence type="inferred from homology"/>
<comment type="function">
    <text evidence="1">The UvrABC repair system catalyzes the recognition and processing of DNA lesions. UvrC both incises the 5' and 3' sides of the lesion. The N-terminal half is responsible for the 3' incision and the C-terminal half is responsible for the 5' incision.</text>
</comment>
<comment type="subunit">
    <text evidence="1">Interacts with UvrB in an incision complex.</text>
</comment>
<comment type="subcellular location">
    <subcellularLocation>
        <location evidence="1">Cytoplasm</location>
    </subcellularLocation>
</comment>
<comment type="similarity">
    <text evidence="1">Belongs to the UvrC family.</text>
</comment>
<evidence type="ECO:0000255" key="1">
    <source>
        <dbReference type="HAMAP-Rule" id="MF_00203"/>
    </source>
</evidence>
<protein>
    <recommendedName>
        <fullName evidence="1">UvrABC system protein C</fullName>
        <shortName evidence="1">Protein UvrC</shortName>
    </recommendedName>
    <alternativeName>
        <fullName evidence="1">Excinuclease ABC subunit C</fullName>
    </alternativeName>
</protein>
<dbReference type="EMBL" id="CP001127">
    <property type="protein sequence ID" value="ACF92924.1"/>
    <property type="molecule type" value="Genomic_DNA"/>
</dbReference>
<dbReference type="RefSeq" id="WP_001289475.1">
    <property type="nucleotide sequence ID" value="NC_011094.1"/>
</dbReference>
<dbReference type="SMR" id="B4TYW7"/>
<dbReference type="KEGG" id="sew:SeSA_A2102"/>
<dbReference type="HOGENOM" id="CLU_014841_3_0_6"/>
<dbReference type="Proteomes" id="UP000001865">
    <property type="component" value="Chromosome"/>
</dbReference>
<dbReference type="GO" id="GO:0005737">
    <property type="term" value="C:cytoplasm"/>
    <property type="evidence" value="ECO:0007669"/>
    <property type="project" value="UniProtKB-SubCell"/>
</dbReference>
<dbReference type="GO" id="GO:0009380">
    <property type="term" value="C:excinuclease repair complex"/>
    <property type="evidence" value="ECO:0007669"/>
    <property type="project" value="InterPro"/>
</dbReference>
<dbReference type="GO" id="GO:0003677">
    <property type="term" value="F:DNA binding"/>
    <property type="evidence" value="ECO:0007669"/>
    <property type="project" value="UniProtKB-UniRule"/>
</dbReference>
<dbReference type="GO" id="GO:0009381">
    <property type="term" value="F:excinuclease ABC activity"/>
    <property type="evidence" value="ECO:0007669"/>
    <property type="project" value="UniProtKB-UniRule"/>
</dbReference>
<dbReference type="GO" id="GO:0006289">
    <property type="term" value="P:nucleotide-excision repair"/>
    <property type="evidence" value="ECO:0007669"/>
    <property type="project" value="UniProtKB-UniRule"/>
</dbReference>
<dbReference type="GO" id="GO:0009432">
    <property type="term" value="P:SOS response"/>
    <property type="evidence" value="ECO:0007669"/>
    <property type="project" value="UniProtKB-UniRule"/>
</dbReference>
<dbReference type="CDD" id="cd10434">
    <property type="entry name" value="GIY-YIG_UvrC_Cho"/>
    <property type="match status" value="1"/>
</dbReference>
<dbReference type="FunFam" id="1.10.150.20:FF:000005">
    <property type="entry name" value="UvrABC system protein C"/>
    <property type="match status" value="1"/>
</dbReference>
<dbReference type="FunFam" id="3.30.420.340:FF:000001">
    <property type="entry name" value="UvrABC system protein C"/>
    <property type="match status" value="1"/>
</dbReference>
<dbReference type="FunFam" id="3.40.1440.10:FF:000001">
    <property type="entry name" value="UvrABC system protein C"/>
    <property type="match status" value="1"/>
</dbReference>
<dbReference type="FunFam" id="4.10.860.10:FF:000002">
    <property type="entry name" value="UvrABC system protein C"/>
    <property type="match status" value="1"/>
</dbReference>
<dbReference type="Gene3D" id="1.10.150.20">
    <property type="entry name" value="5' to 3' exonuclease, C-terminal subdomain"/>
    <property type="match status" value="1"/>
</dbReference>
<dbReference type="Gene3D" id="3.40.1440.10">
    <property type="entry name" value="GIY-YIG endonuclease"/>
    <property type="match status" value="1"/>
</dbReference>
<dbReference type="Gene3D" id="4.10.860.10">
    <property type="entry name" value="UVR domain"/>
    <property type="match status" value="1"/>
</dbReference>
<dbReference type="Gene3D" id="3.30.420.340">
    <property type="entry name" value="UvrC, RNAse H endonuclease domain"/>
    <property type="match status" value="1"/>
</dbReference>
<dbReference type="HAMAP" id="MF_00203">
    <property type="entry name" value="UvrC"/>
    <property type="match status" value="1"/>
</dbReference>
<dbReference type="InterPro" id="IPR000305">
    <property type="entry name" value="GIY-YIG_endonuc"/>
</dbReference>
<dbReference type="InterPro" id="IPR035901">
    <property type="entry name" value="GIY-YIG_endonuc_sf"/>
</dbReference>
<dbReference type="InterPro" id="IPR047296">
    <property type="entry name" value="GIY-YIG_UvrC_Cho"/>
</dbReference>
<dbReference type="InterPro" id="IPR003583">
    <property type="entry name" value="Hlx-hairpin-Hlx_DNA-bd_motif"/>
</dbReference>
<dbReference type="InterPro" id="IPR010994">
    <property type="entry name" value="RuvA_2-like"/>
</dbReference>
<dbReference type="InterPro" id="IPR001943">
    <property type="entry name" value="UVR_dom"/>
</dbReference>
<dbReference type="InterPro" id="IPR036876">
    <property type="entry name" value="UVR_dom_sf"/>
</dbReference>
<dbReference type="InterPro" id="IPR050066">
    <property type="entry name" value="UvrABC_protein_C"/>
</dbReference>
<dbReference type="InterPro" id="IPR004791">
    <property type="entry name" value="UvrC"/>
</dbReference>
<dbReference type="InterPro" id="IPR001162">
    <property type="entry name" value="UvrC_RNase_H_dom"/>
</dbReference>
<dbReference type="InterPro" id="IPR038476">
    <property type="entry name" value="UvrC_RNase_H_dom_sf"/>
</dbReference>
<dbReference type="NCBIfam" id="NF001824">
    <property type="entry name" value="PRK00558.1-5"/>
    <property type="match status" value="1"/>
</dbReference>
<dbReference type="NCBIfam" id="TIGR00194">
    <property type="entry name" value="uvrC"/>
    <property type="match status" value="1"/>
</dbReference>
<dbReference type="PANTHER" id="PTHR30562:SF1">
    <property type="entry name" value="UVRABC SYSTEM PROTEIN C"/>
    <property type="match status" value="1"/>
</dbReference>
<dbReference type="PANTHER" id="PTHR30562">
    <property type="entry name" value="UVRC/OXIDOREDUCTASE"/>
    <property type="match status" value="1"/>
</dbReference>
<dbReference type="Pfam" id="PF01541">
    <property type="entry name" value="GIY-YIG"/>
    <property type="match status" value="1"/>
</dbReference>
<dbReference type="Pfam" id="PF14520">
    <property type="entry name" value="HHH_5"/>
    <property type="match status" value="1"/>
</dbReference>
<dbReference type="Pfam" id="PF02151">
    <property type="entry name" value="UVR"/>
    <property type="match status" value="1"/>
</dbReference>
<dbReference type="Pfam" id="PF22920">
    <property type="entry name" value="UvrC_RNaseH"/>
    <property type="match status" value="1"/>
</dbReference>
<dbReference type="Pfam" id="PF08459">
    <property type="entry name" value="UvrC_RNaseH_dom"/>
    <property type="match status" value="1"/>
</dbReference>
<dbReference type="SMART" id="SM00465">
    <property type="entry name" value="GIYc"/>
    <property type="match status" value="1"/>
</dbReference>
<dbReference type="SMART" id="SM00278">
    <property type="entry name" value="HhH1"/>
    <property type="match status" value="2"/>
</dbReference>
<dbReference type="SUPFAM" id="SSF46600">
    <property type="entry name" value="C-terminal UvrC-binding domain of UvrB"/>
    <property type="match status" value="1"/>
</dbReference>
<dbReference type="SUPFAM" id="SSF82771">
    <property type="entry name" value="GIY-YIG endonuclease"/>
    <property type="match status" value="1"/>
</dbReference>
<dbReference type="SUPFAM" id="SSF47781">
    <property type="entry name" value="RuvA domain 2-like"/>
    <property type="match status" value="1"/>
</dbReference>
<dbReference type="PROSITE" id="PS50164">
    <property type="entry name" value="GIY_YIG"/>
    <property type="match status" value="1"/>
</dbReference>
<dbReference type="PROSITE" id="PS50151">
    <property type="entry name" value="UVR"/>
    <property type="match status" value="1"/>
</dbReference>
<dbReference type="PROSITE" id="PS50165">
    <property type="entry name" value="UVRC"/>
    <property type="match status" value="1"/>
</dbReference>
<feature type="chain" id="PRO_1000099518" description="UvrABC system protein C">
    <location>
        <begin position="1"/>
        <end position="610"/>
    </location>
</feature>
<feature type="domain" description="GIY-YIG" evidence="1">
    <location>
        <begin position="16"/>
        <end position="94"/>
    </location>
</feature>
<feature type="domain" description="UVR" evidence="1">
    <location>
        <begin position="204"/>
        <end position="239"/>
    </location>
</feature>
<keyword id="KW-0963">Cytoplasm</keyword>
<keyword id="KW-0227">DNA damage</keyword>
<keyword id="KW-0228">DNA excision</keyword>
<keyword id="KW-0234">DNA repair</keyword>
<keyword id="KW-0267">Excision nuclease</keyword>
<keyword id="KW-0742">SOS response</keyword>
<organism>
    <name type="scientific">Salmonella schwarzengrund (strain CVM19633)</name>
    <dbReference type="NCBI Taxonomy" id="439843"/>
    <lineage>
        <taxon>Bacteria</taxon>
        <taxon>Pseudomonadati</taxon>
        <taxon>Pseudomonadota</taxon>
        <taxon>Gammaproteobacteria</taxon>
        <taxon>Enterobacterales</taxon>
        <taxon>Enterobacteriaceae</taxon>
        <taxon>Salmonella</taxon>
    </lineage>
</organism>
<gene>
    <name evidence="1" type="primary">uvrC</name>
    <name type="ordered locus">SeSA_A2102</name>
</gene>
<reference key="1">
    <citation type="journal article" date="2011" name="J. Bacteriol.">
        <title>Comparative genomics of 28 Salmonella enterica isolates: evidence for CRISPR-mediated adaptive sublineage evolution.</title>
        <authorList>
            <person name="Fricke W.F."/>
            <person name="Mammel M.K."/>
            <person name="McDermott P.F."/>
            <person name="Tartera C."/>
            <person name="White D.G."/>
            <person name="Leclerc J.E."/>
            <person name="Ravel J."/>
            <person name="Cebula T.A."/>
        </authorList>
    </citation>
    <scope>NUCLEOTIDE SEQUENCE [LARGE SCALE GENOMIC DNA]</scope>
    <source>
        <strain>CVM19633</strain>
    </source>
</reference>